<feature type="chain" id="PRO_1000138804" description="Orotate phosphoribosyltransferase">
    <location>
        <begin position="1"/>
        <end position="196"/>
    </location>
</feature>
<feature type="binding site" evidence="1">
    <location>
        <begin position="117"/>
        <end position="125"/>
    </location>
    <ligand>
        <name>5-phospho-alpha-D-ribose 1-diphosphate</name>
        <dbReference type="ChEBI" id="CHEBI:58017"/>
    </ligand>
</feature>
<feature type="binding site" evidence="1">
    <location>
        <position position="121"/>
    </location>
    <ligand>
        <name>orotate</name>
        <dbReference type="ChEBI" id="CHEBI:30839"/>
    </ligand>
</feature>
<feature type="binding site" evidence="1">
    <location>
        <position position="149"/>
    </location>
    <ligand>
        <name>orotate</name>
        <dbReference type="ChEBI" id="CHEBI:30839"/>
    </ligand>
</feature>
<name>PYRE_METEP</name>
<keyword id="KW-0328">Glycosyltransferase</keyword>
<keyword id="KW-0460">Magnesium</keyword>
<keyword id="KW-0665">Pyrimidine biosynthesis</keyword>
<keyword id="KW-0808">Transferase</keyword>
<gene>
    <name evidence="1" type="primary">pyrE</name>
    <name type="ordered locus">Mext_3194</name>
</gene>
<protein>
    <recommendedName>
        <fullName evidence="1">Orotate phosphoribosyltransferase</fullName>
        <shortName evidence="1">OPRT</shortName>
        <shortName evidence="1">OPRTase</shortName>
        <ecNumber evidence="1">2.4.2.10</ecNumber>
    </recommendedName>
</protein>
<sequence length="196" mass="20609">MTPEEVLEEFRSAGALLQGHFILSSGLRSPTFLQKMTIFSDPARTERLCRALAEVITARFGRIDIVVSPAIGGIIPGYETARHLGAKAIFVERDPGGPFTLRRGFSIPAGTRAVIVEDIVTTGLSARECLASLKDEAGEVVGAACLIDRSGGRGAIGLPLLSLVTLDIPTYAPDALPAELAAIPPVKPGSRALPKP</sequence>
<dbReference type="EC" id="2.4.2.10" evidence="1"/>
<dbReference type="EMBL" id="CP000908">
    <property type="protein sequence ID" value="ABY31581.1"/>
    <property type="molecule type" value="Genomic_DNA"/>
</dbReference>
<dbReference type="RefSeq" id="WP_012254478.1">
    <property type="nucleotide sequence ID" value="NC_010172.1"/>
</dbReference>
<dbReference type="SMR" id="A9VYY9"/>
<dbReference type="KEGG" id="mex:Mext_3194"/>
<dbReference type="eggNOG" id="COG0461">
    <property type="taxonomic scope" value="Bacteria"/>
</dbReference>
<dbReference type="HOGENOM" id="CLU_074878_3_0_5"/>
<dbReference type="BioCyc" id="MEXT419610:MEXT_RS16050-MONOMER"/>
<dbReference type="UniPathway" id="UPA00070">
    <property type="reaction ID" value="UER00119"/>
</dbReference>
<dbReference type="GO" id="GO:0000287">
    <property type="term" value="F:magnesium ion binding"/>
    <property type="evidence" value="ECO:0007669"/>
    <property type="project" value="UniProtKB-UniRule"/>
</dbReference>
<dbReference type="GO" id="GO:0004588">
    <property type="term" value="F:orotate phosphoribosyltransferase activity"/>
    <property type="evidence" value="ECO:0007669"/>
    <property type="project" value="UniProtKB-UniRule"/>
</dbReference>
<dbReference type="GO" id="GO:0044205">
    <property type="term" value="P:'de novo' UMP biosynthetic process"/>
    <property type="evidence" value="ECO:0007669"/>
    <property type="project" value="UniProtKB-UniRule"/>
</dbReference>
<dbReference type="GO" id="GO:0019856">
    <property type="term" value="P:pyrimidine nucleobase biosynthetic process"/>
    <property type="evidence" value="ECO:0007669"/>
    <property type="project" value="InterPro"/>
</dbReference>
<dbReference type="CDD" id="cd06223">
    <property type="entry name" value="PRTases_typeI"/>
    <property type="match status" value="1"/>
</dbReference>
<dbReference type="Gene3D" id="3.40.50.2020">
    <property type="match status" value="1"/>
</dbReference>
<dbReference type="HAMAP" id="MF_01208">
    <property type="entry name" value="PyrE"/>
    <property type="match status" value="1"/>
</dbReference>
<dbReference type="InterPro" id="IPR023031">
    <property type="entry name" value="OPRT"/>
</dbReference>
<dbReference type="InterPro" id="IPR006273">
    <property type="entry name" value="Orotate_PRibTrfase_bac"/>
</dbReference>
<dbReference type="InterPro" id="IPR000836">
    <property type="entry name" value="PRibTrfase_dom"/>
</dbReference>
<dbReference type="InterPro" id="IPR029057">
    <property type="entry name" value="PRTase-like"/>
</dbReference>
<dbReference type="NCBIfam" id="TIGR01367">
    <property type="entry name" value="pyrE_Therm"/>
    <property type="match status" value="1"/>
</dbReference>
<dbReference type="PANTHER" id="PTHR19278">
    <property type="entry name" value="OROTATE PHOSPHORIBOSYLTRANSFERASE"/>
    <property type="match status" value="1"/>
</dbReference>
<dbReference type="PANTHER" id="PTHR19278:SF9">
    <property type="entry name" value="URIDINE 5'-MONOPHOSPHATE SYNTHASE"/>
    <property type="match status" value="1"/>
</dbReference>
<dbReference type="Pfam" id="PF00156">
    <property type="entry name" value="Pribosyltran"/>
    <property type="match status" value="1"/>
</dbReference>
<dbReference type="SUPFAM" id="SSF53271">
    <property type="entry name" value="PRTase-like"/>
    <property type="match status" value="1"/>
</dbReference>
<dbReference type="PROSITE" id="PS00103">
    <property type="entry name" value="PUR_PYR_PR_TRANSFER"/>
    <property type="match status" value="1"/>
</dbReference>
<reference key="1">
    <citation type="submission" date="2007-12" db="EMBL/GenBank/DDBJ databases">
        <title>Complete sequence of Methylobacterium extorquens PA1.</title>
        <authorList>
            <consortium name="US DOE Joint Genome Institute"/>
            <person name="Copeland A."/>
            <person name="Lucas S."/>
            <person name="Lapidus A."/>
            <person name="Barry K."/>
            <person name="Glavina del Rio T."/>
            <person name="Dalin E."/>
            <person name="Tice H."/>
            <person name="Pitluck S."/>
            <person name="Saunders E."/>
            <person name="Brettin T."/>
            <person name="Bruce D."/>
            <person name="Detter J.C."/>
            <person name="Han C."/>
            <person name="Schmutz J."/>
            <person name="Larimer F."/>
            <person name="Land M."/>
            <person name="Hauser L."/>
            <person name="Kyrpides N."/>
            <person name="Kim E."/>
            <person name="Marx C."/>
            <person name="Richardson P."/>
        </authorList>
    </citation>
    <scope>NUCLEOTIDE SEQUENCE [LARGE SCALE GENOMIC DNA]</scope>
    <source>
        <strain>PA1</strain>
    </source>
</reference>
<proteinExistence type="inferred from homology"/>
<comment type="function">
    <text evidence="1">Catalyzes the transfer of a ribosyl phosphate group from 5-phosphoribose 1-diphosphate to orotate, leading to the formation of orotidine monophosphate (OMP).</text>
</comment>
<comment type="catalytic activity">
    <reaction evidence="1">
        <text>orotidine 5'-phosphate + diphosphate = orotate + 5-phospho-alpha-D-ribose 1-diphosphate</text>
        <dbReference type="Rhea" id="RHEA:10380"/>
        <dbReference type="ChEBI" id="CHEBI:30839"/>
        <dbReference type="ChEBI" id="CHEBI:33019"/>
        <dbReference type="ChEBI" id="CHEBI:57538"/>
        <dbReference type="ChEBI" id="CHEBI:58017"/>
        <dbReference type="EC" id="2.4.2.10"/>
    </reaction>
</comment>
<comment type="cofactor">
    <cofactor evidence="1">
        <name>Mg(2+)</name>
        <dbReference type="ChEBI" id="CHEBI:18420"/>
    </cofactor>
</comment>
<comment type="pathway">
    <text evidence="1">Pyrimidine metabolism; UMP biosynthesis via de novo pathway; UMP from orotate: step 1/2.</text>
</comment>
<comment type="subunit">
    <text evidence="1">Homodimer.</text>
</comment>
<comment type="similarity">
    <text evidence="1">Belongs to the purine/pyrimidine phosphoribosyltransferase family. PyrE subfamily.</text>
</comment>
<evidence type="ECO:0000255" key="1">
    <source>
        <dbReference type="HAMAP-Rule" id="MF_01208"/>
    </source>
</evidence>
<accession>A9VYY9</accession>
<organism>
    <name type="scientific">Methylorubrum extorquens (strain PA1)</name>
    <name type="common">Methylobacterium extorquens</name>
    <dbReference type="NCBI Taxonomy" id="419610"/>
    <lineage>
        <taxon>Bacteria</taxon>
        <taxon>Pseudomonadati</taxon>
        <taxon>Pseudomonadota</taxon>
        <taxon>Alphaproteobacteria</taxon>
        <taxon>Hyphomicrobiales</taxon>
        <taxon>Methylobacteriaceae</taxon>
        <taxon>Methylorubrum</taxon>
    </lineage>
</organism>